<accession>Q2JMC1</accession>
<reference key="1">
    <citation type="journal article" date="2007" name="ISME J.">
        <title>Population level functional diversity in a microbial community revealed by comparative genomic and metagenomic analyses.</title>
        <authorList>
            <person name="Bhaya D."/>
            <person name="Grossman A.R."/>
            <person name="Steunou A.-S."/>
            <person name="Khuri N."/>
            <person name="Cohan F.M."/>
            <person name="Hamamura N."/>
            <person name="Melendrez M.C."/>
            <person name="Bateson M.M."/>
            <person name="Ward D.M."/>
            <person name="Heidelberg J.F."/>
        </authorList>
    </citation>
    <scope>NUCLEOTIDE SEQUENCE [LARGE SCALE GENOMIC DNA]</scope>
    <source>
        <strain>JA-2-3B'a(2-13)</strain>
    </source>
</reference>
<organism>
    <name type="scientific">Synechococcus sp. (strain JA-2-3B'a(2-13))</name>
    <name type="common">Cyanobacteria bacterium Yellowstone B-Prime</name>
    <dbReference type="NCBI Taxonomy" id="321332"/>
    <lineage>
        <taxon>Bacteria</taxon>
        <taxon>Bacillati</taxon>
        <taxon>Cyanobacteriota</taxon>
        <taxon>Cyanophyceae</taxon>
        <taxon>Synechococcales</taxon>
        <taxon>Synechococcaceae</taxon>
        <taxon>Synechococcus</taxon>
    </lineage>
</organism>
<name>MRAY_SYNJB</name>
<proteinExistence type="inferred from homology"/>
<evidence type="ECO:0000255" key="1">
    <source>
        <dbReference type="HAMAP-Rule" id="MF_00038"/>
    </source>
</evidence>
<sequence>MALSLGLGLALSALVIGIRPQVVVPFGLSALGSALLGSLLIPGLRRWKAGQVIRQEGPQSHQKKAGTPTMGGISFLPVGLLVAGIWSGWDPHWLAVALLTLAYSFVGWLDDWLVIRQQSNKGLSPQHKLLLQVGVALGFCVYLAWQGIPTSLTLPGIGTLSLGWLFWPLALFVLVGTNNAVNLTDGMDGLAAGVVAILLIGLGLLHRDPELSVLAFTLSGACLGFLVHNHHRARLFMGDTGSLGLGGALAGLALLGDQLWALALMGGVLVAEALSVMLQVGYFQYTKRKTGTGQRLLRMSPLHHHLELGGWSEVQVVGSFYGVTALLVGLGWAWWHWTGM</sequence>
<dbReference type="EC" id="2.7.8.13" evidence="1"/>
<dbReference type="EMBL" id="CP000240">
    <property type="protein sequence ID" value="ABD02123.1"/>
    <property type="molecule type" value="Genomic_DNA"/>
</dbReference>
<dbReference type="RefSeq" id="WP_011432776.1">
    <property type="nucleotide sequence ID" value="NC_007776.1"/>
</dbReference>
<dbReference type="SMR" id="Q2JMC1"/>
<dbReference type="STRING" id="321332.CYB_1146"/>
<dbReference type="KEGG" id="cyb:CYB_1146"/>
<dbReference type="eggNOG" id="COG0472">
    <property type="taxonomic scope" value="Bacteria"/>
</dbReference>
<dbReference type="HOGENOM" id="CLU_023982_0_2_3"/>
<dbReference type="OrthoDB" id="9805475at2"/>
<dbReference type="UniPathway" id="UPA00219"/>
<dbReference type="Proteomes" id="UP000001938">
    <property type="component" value="Chromosome"/>
</dbReference>
<dbReference type="GO" id="GO:0005886">
    <property type="term" value="C:plasma membrane"/>
    <property type="evidence" value="ECO:0007669"/>
    <property type="project" value="UniProtKB-SubCell"/>
</dbReference>
<dbReference type="GO" id="GO:0046872">
    <property type="term" value="F:metal ion binding"/>
    <property type="evidence" value="ECO:0007669"/>
    <property type="project" value="UniProtKB-KW"/>
</dbReference>
<dbReference type="GO" id="GO:0008963">
    <property type="term" value="F:phospho-N-acetylmuramoyl-pentapeptide-transferase activity"/>
    <property type="evidence" value="ECO:0007669"/>
    <property type="project" value="UniProtKB-UniRule"/>
</dbReference>
<dbReference type="GO" id="GO:0051992">
    <property type="term" value="F:UDP-N-acetylmuramoyl-L-alanyl-D-glutamyl-meso-2,6-diaminopimelyl-D-alanyl-D-alanine:undecaprenyl-phosphate transferase activity"/>
    <property type="evidence" value="ECO:0007669"/>
    <property type="project" value="RHEA"/>
</dbReference>
<dbReference type="GO" id="GO:0051301">
    <property type="term" value="P:cell division"/>
    <property type="evidence" value="ECO:0007669"/>
    <property type="project" value="UniProtKB-KW"/>
</dbReference>
<dbReference type="GO" id="GO:0071555">
    <property type="term" value="P:cell wall organization"/>
    <property type="evidence" value="ECO:0007669"/>
    <property type="project" value="UniProtKB-KW"/>
</dbReference>
<dbReference type="GO" id="GO:0009252">
    <property type="term" value="P:peptidoglycan biosynthetic process"/>
    <property type="evidence" value="ECO:0007669"/>
    <property type="project" value="UniProtKB-UniRule"/>
</dbReference>
<dbReference type="GO" id="GO:0008360">
    <property type="term" value="P:regulation of cell shape"/>
    <property type="evidence" value="ECO:0007669"/>
    <property type="project" value="UniProtKB-KW"/>
</dbReference>
<dbReference type="CDD" id="cd06852">
    <property type="entry name" value="GT_MraY"/>
    <property type="match status" value="1"/>
</dbReference>
<dbReference type="HAMAP" id="MF_00038">
    <property type="entry name" value="MraY"/>
    <property type="match status" value="1"/>
</dbReference>
<dbReference type="InterPro" id="IPR000715">
    <property type="entry name" value="Glycosyl_transferase_4"/>
</dbReference>
<dbReference type="InterPro" id="IPR003524">
    <property type="entry name" value="PNAcMuramoyl-5peptid_Trfase"/>
</dbReference>
<dbReference type="InterPro" id="IPR018480">
    <property type="entry name" value="PNAcMuramoyl-5peptid_Trfase_CS"/>
</dbReference>
<dbReference type="NCBIfam" id="TIGR00445">
    <property type="entry name" value="mraY"/>
    <property type="match status" value="1"/>
</dbReference>
<dbReference type="PANTHER" id="PTHR22926">
    <property type="entry name" value="PHOSPHO-N-ACETYLMURAMOYL-PENTAPEPTIDE-TRANSFERASE"/>
    <property type="match status" value="1"/>
</dbReference>
<dbReference type="PANTHER" id="PTHR22926:SF5">
    <property type="entry name" value="PHOSPHO-N-ACETYLMURAMOYL-PENTAPEPTIDE-TRANSFERASE HOMOLOG"/>
    <property type="match status" value="1"/>
</dbReference>
<dbReference type="Pfam" id="PF00953">
    <property type="entry name" value="Glycos_transf_4"/>
    <property type="match status" value="1"/>
</dbReference>
<dbReference type="Pfam" id="PF10555">
    <property type="entry name" value="MraY_sig1"/>
    <property type="match status" value="1"/>
</dbReference>
<dbReference type="PROSITE" id="PS01347">
    <property type="entry name" value="MRAY_1"/>
    <property type="match status" value="1"/>
</dbReference>
<dbReference type="PROSITE" id="PS01348">
    <property type="entry name" value="MRAY_2"/>
    <property type="match status" value="1"/>
</dbReference>
<keyword id="KW-0131">Cell cycle</keyword>
<keyword id="KW-0132">Cell division</keyword>
<keyword id="KW-0997">Cell inner membrane</keyword>
<keyword id="KW-1003">Cell membrane</keyword>
<keyword id="KW-0133">Cell shape</keyword>
<keyword id="KW-0961">Cell wall biogenesis/degradation</keyword>
<keyword id="KW-0460">Magnesium</keyword>
<keyword id="KW-0472">Membrane</keyword>
<keyword id="KW-0479">Metal-binding</keyword>
<keyword id="KW-0573">Peptidoglycan synthesis</keyword>
<keyword id="KW-1185">Reference proteome</keyword>
<keyword id="KW-0808">Transferase</keyword>
<keyword id="KW-0812">Transmembrane</keyword>
<keyword id="KW-1133">Transmembrane helix</keyword>
<feature type="chain" id="PRO_0000235492" description="Phospho-N-acetylmuramoyl-pentapeptide-transferase">
    <location>
        <begin position="1"/>
        <end position="340"/>
    </location>
</feature>
<feature type="transmembrane region" description="Helical" evidence="1">
    <location>
        <begin position="22"/>
        <end position="42"/>
    </location>
</feature>
<feature type="transmembrane region" description="Helical" evidence="1">
    <location>
        <begin position="69"/>
        <end position="89"/>
    </location>
</feature>
<feature type="transmembrane region" description="Helical" evidence="1">
    <location>
        <begin position="95"/>
        <end position="115"/>
    </location>
</feature>
<feature type="transmembrane region" description="Helical" evidence="1">
    <location>
        <begin position="129"/>
        <end position="149"/>
    </location>
</feature>
<feature type="transmembrane region" description="Helical" evidence="1">
    <location>
        <begin position="156"/>
        <end position="176"/>
    </location>
</feature>
<feature type="transmembrane region" description="Helical" evidence="1">
    <location>
        <begin position="186"/>
        <end position="206"/>
    </location>
</feature>
<feature type="transmembrane region" description="Helical" evidence="1">
    <location>
        <begin position="209"/>
        <end position="229"/>
    </location>
</feature>
<feature type="transmembrane region" description="Helical" evidence="1">
    <location>
        <begin position="235"/>
        <end position="257"/>
    </location>
</feature>
<feature type="transmembrane region" description="Helical" evidence="1">
    <location>
        <begin position="316"/>
        <end position="336"/>
    </location>
</feature>
<comment type="function">
    <text evidence="1">Catalyzes the initial step of the lipid cycle reactions in the biosynthesis of the cell wall peptidoglycan: transfers peptidoglycan precursor phospho-MurNAc-pentapeptide from UDP-MurNAc-pentapeptide onto the lipid carrier undecaprenyl phosphate, yielding undecaprenyl-pyrophosphoryl-MurNAc-pentapeptide, known as lipid I.</text>
</comment>
<comment type="catalytic activity">
    <reaction evidence="1">
        <text>UDP-N-acetyl-alpha-D-muramoyl-L-alanyl-gamma-D-glutamyl-meso-2,6-diaminopimeloyl-D-alanyl-D-alanine + di-trans,octa-cis-undecaprenyl phosphate = di-trans,octa-cis-undecaprenyl diphospho-N-acetyl-alpha-D-muramoyl-L-alanyl-D-glutamyl-meso-2,6-diaminopimeloyl-D-alanyl-D-alanine + UMP</text>
        <dbReference type="Rhea" id="RHEA:28386"/>
        <dbReference type="ChEBI" id="CHEBI:57865"/>
        <dbReference type="ChEBI" id="CHEBI:60392"/>
        <dbReference type="ChEBI" id="CHEBI:61386"/>
        <dbReference type="ChEBI" id="CHEBI:61387"/>
        <dbReference type="EC" id="2.7.8.13"/>
    </reaction>
</comment>
<comment type="cofactor">
    <cofactor evidence="1">
        <name>Mg(2+)</name>
        <dbReference type="ChEBI" id="CHEBI:18420"/>
    </cofactor>
</comment>
<comment type="pathway">
    <text evidence="1">Cell wall biogenesis; peptidoglycan biosynthesis.</text>
</comment>
<comment type="subcellular location">
    <subcellularLocation>
        <location evidence="1">Cell inner membrane</location>
        <topology evidence="1">Multi-pass membrane protein</topology>
    </subcellularLocation>
</comment>
<comment type="similarity">
    <text evidence="1">Belongs to the glycosyltransferase 4 family. MraY subfamily.</text>
</comment>
<protein>
    <recommendedName>
        <fullName evidence="1">Phospho-N-acetylmuramoyl-pentapeptide-transferase</fullName>
        <ecNumber evidence="1">2.7.8.13</ecNumber>
    </recommendedName>
    <alternativeName>
        <fullName evidence="1">UDP-MurNAc-pentapeptide phosphotransferase</fullName>
    </alternativeName>
</protein>
<gene>
    <name evidence="1" type="primary">mraY</name>
    <name type="ordered locus">CYB_1146</name>
</gene>